<organism>
    <name type="scientific">Staphylococcus aureus (strain MSSA476)</name>
    <dbReference type="NCBI Taxonomy" id="282459"/>
    <lineage>
        <taxon>Bacteria</taxon>
        <taxon>Bacillati</taxon>
        <taxon>Bacillota</taxon>
        <taxon>Bacilli</taxon>
        <taxon>Bacillales</taxon>
        <taxon>Staphylococcaceae</taxon>
        <taxon>Staphylococcus</taxon>
    </lineage>
</organism>
<sequence>MRKFLSKTHHHTNPLWRVYRLVKFSKVFKNVIIIEFSKFIPSMVLKRHIYKQLLNINIGNQSSIAYKVMLDIFYPELITIGSNSVIGYNVTILTHEALVDEFRYGPVTIGSNTLIGANATILPGITIGDNVKVAAGTVVSKDIPDNGFAYGNPMYIKMIRR</sequence>
<reference key="1">
    <citation type="journal article" date="2004" name="Proc. Natl. Acad. Sci. U.S.A.">
        <title>Complete genomes of two clinical Staphylococcus aureus strains: evidence for the rapid evolution of virulence and drug resistance.</title>
        <authorList>
            <person name="Holden M.T.G."/>
            <person name="Feil E.J."/>
            <person name="Lindsay J.A."/>
            <person name="Peacock S.J."/>
            <person name="Day N.P.J."/>
            <person name="Enright M.C."/>
            <person name="Foster T.J."/>
            <person name="Moore C.E."/>
            <person name="Hurst L."/>
            <person name="Atkin R."/>
            <person name="Barron A."/>
            <person name="Bason N."/>
            <person name="Bentley S.D."/>
            <person name="Chillingworth C."/>
            <person name="Chillingworth T."/>
            <person name="Churcher C."/>
            <person name="Clark L."/>
            <person name="Corton C."/>
            <person name="Cronin A."/>
            <person name="Doggett J."/>
            <person name="Dowd L."/>
            <person name="Feltwell T."/>
            <person name="Hance Z."/>
            <person name="Harris B."/>
            <person name="Hauser H."/>
            <person name="Holroyd S."/>
            <person name="Jagels K."/>
            <person name="James K.D."/>
            <person name="Lennard N."/>
            <person name="Line A."/>
            <person name="Mayes R."/>
            <person name="Moule S."/>
            <person name="Mungall K."/>
            <person name="Ormond D."/>
            <person name="Quail M.A."/>
            <person name="Rabbinowitsch E."/>
            <person name="Rutherford K.M."/>
            <person name="Sanders M."/>
            <person name="Sharp S."/>
            <person name="Simmonds M."/>
            <person name="Stevens K."/>
            <person name="Whitehead S."/>
            <person name="Barrell B.G."/>
            <person name="Spratt B.G."/>
            <person name="Parkhill J."/>
        </authorList>
    </citation>
    <scope>NUCLEOTIDE SEQUENCE [LARGE SCALE GENOMIC DNA]</scope>
    <source>
        <strain>MSSA476</strain>
    </source>
</reference>
<feature type="chain" id="PRO_0000068749" description="Putative acetyltransferase SAS0727">
    <location>
        <begin position="1"/>
        <end position="161"/>
    </location>
</feature>
<comment type="similarity">
    <text evidence="1">Belongs to the transferase hexapeptide repeat family.</text>
</comment>
<accession>Q6GB68</accession>
<dbReference type="EC" id="2.3.1.-"/>
<dbReference type="EMBL" id="BX571857">
    <property type="protein sequence ID" value="CAG42503.1"/>
    <property type="molecule type" value="Genomic_DNA"/>
</dbReference>
<dbReference type="RefSeq" id="WP_001224793.1">
    <property type="nucleotide sequence ID" value="NC_002953.3"/>
</dbReference>
<dbReference type="SMR" id="Q6GB68"/>
<dbReference type="KEGG" id="sas:SAS0727"/>
<dbReference type="HOGENOM" id="CLU_051638_16_1_9"/>
<dbReference type="GO" id="GO:0016746">
    <property type="term" value="F:acyltransferase activity"/>
    <property type="evidence" value="ECO:0007669"/>
    <property type="project" value="UniProtKB-KW"/>
</dbReference>
<dbReference type="Gene3D" id="2.160.10.10">
    <property type="entry name" value="Hexapeptide repeat proteins"/>
    <property type="match status" value="1"/>
</dbReference>
<dbReference type="InterPro" id="IPR001451">
    <property type="entry name" value="Hexapep"/>
</dbReference>
<dbReference type="InterPro" id="IPR018357">
    <property type="entry name" value="Hexapep_transf_CS"/>
</dbReference>
<dbReference type="InterPro" id="IPR051159">
    <property type="entry name" value="Hexapeptide_acetyltransf"/>
</dbReference>
<dbReference type="InterPro" id="IPR011004">
    <property type="entry name" value="Trimer_LpxA-like_sf"/>
</dbReference>
<dbReference type="PANTHER" id="PTHR23416">
    <property type="entry name" value="SIALIC ACID SYNTHASE-RELATED"/>
    <property type="match status" value="1"/>
</dbReference>
<dbReference type="Pfam" id="PF14602">
    <property type="entry name" value="Hexapep_2"/>
    <property type="match status" value="1"/>
</dbReference>
<dbReference type="SUPFAM" id="SSF51161">
    <property type="entry name" value="Trimeric LpxA-like enzymes"/>
    <property type="match status" value="1"/>
</dbReference>
<dbReference type="PROSITE" id="PS00101">
    <property type="entry name" value="HEXAPEP_TRANSFERASES"/>
    <property type="match status" value="1"/>
</dbReference>
<proteinExistence type="inferred from homology"/>
<keyword id="KW-0012">Acyltransferase</keyword>
<keyword id="KW-0677">Repeat</keyword>
<keyword id="KW-0808">Transferase</keyword>
<gene>
    <name type="ordered locus">SAS0727</name>
</gene>
<name>ATRF1_STAAS</name>
<protein>
    <recommendedName>
        <fullName>Putative acetyltransferase SAS0727</fullName>
        <ecNumber>2.3.1.-</ecNumber>
    </recommendedName>
</protein>
<evidence type="ECO:0000305" key="1"/>